<evidence type="ECO:0000255" key="1">
    <source>
        <dbReference type="HAMAP-Rule" id="MF_00368"/>
    </source>
</evidence>
<evidence type="ECO:0000305" key="2"/>
<organism>
    <name type="scientific">Pseudothermotoga lettingae (strain ATCC BAA-301 / DSM 14385 / NBRC 107922 / TMO)</name>
    <name type="common">Thermotoga lettingae</name>
    <dbReference type="NCBI Taxonomy" id="416591"/>
    <lineage>
        <taxon>Bacteria</taxon>
        <taxon>Thermotogati</taxon>
        <taxon>Thermotogota</taxon>
        <taxon>Thermotogae</taxon>
        <taxon>Thermotogales</taxon>
        <taxon>Thermotogaceae</taxon>
        <taxon>Pseudothermotoga</taxon>
    </lineage>
</organism>
<dbReference type="EMBL" id="CP000812">
    <property type="protein sequence ID" value="ABV33043.1"/>
    <property type="molecule type" value="Genomic_DNA"/>
</dbReference>
<dbReference type="RefSeq" id="WP_012002524.1">
    <property type="nucleotide sequence ID" value="NZ_BSDV01000001.1"/>
</dbReference>
<dbReference type="SMR" id="A8F4F9"/>
<dbReference type="STRING" id="416591.Tlet_0476"/>
<dbReference type="KEGG" id="tle:Tlet_0476"/>
<dbReference type="eggNOG" id="COG0222">
    <property type="taxonomic scope" value="Bacteria"/>
</dbReference>
<dbReference type="HOGENOM" id="CLU_086499_3_2_0"/>
<dbReference type="OrthoDB" id="9811748at2"/>
<dbReference type="Proteomes" id="UP000002016">
    <property type="component" value="Chromosome"/>
</dbReference>
<dbReference type="GO" id="GO:0022625">
    <property type="term" value="C:cytosolic large ribosomal subunit"/>
    <property type="evidence" value="ECO:0007669"/>
    <property type="project" value="TreeGrafter"/>
</dbReference>
<dbReference type="GO" id="GO:0003729">
    <property type="term" value="F:mRNA binding"/>
    <property type="evidence" value="ECO:0007669"/>
    <property type="project" value="TreeGrafter"/>
</dbReference>
<dbReference type="GO" id="GO:0003735">
    <property type="term" value="F:structural constituent of ribosome"/>
    <property type="evidence" value="ECO:0007669"/>
    <property type="project" value="InterPro"/>
</dbReference>
<dbReference type="GO" id="GO:0006412">
    <property type="term" value="P:translation"/>
    <property type="evidence" value="ECO:0007669"/>
    <property type="project" value="UniProtKB-UniRule"/>
</dbReference>
<dbReference type="CDD" id="cd00387">
    <property type="entry name" value="Ribosomal_L7_L12"/>
    <property type="match status" value="1"/>
</dbReference>
<dbReference type="FunFam" id="1.20.5.710:FF:000008">
    <property type="entry name" value="50S ribosomal protein L7/L12"/>
    <property type="match status" value="1"/>
</dbReference>
<dbReference type="FunFam" id="3.30.1390.10:FF:000001">
    <property type="entry name" value="50S ribosomal protein L7/L12"/>
    <property type="match status" value="1"/>
</dbReference>
<dbReference type="Gene3D" id="3.30.1390.10">
    <property type="match status" value="1"/>
</dbReference>
<dbReference type="Gene3D" id="1.20.5.710">
    <property type="entry name" value="Single helix bin"/>
    <property type="match status" value="1"/>
</dbReference>
<dbReference type="HAMAP" id="MF_00368">
    <property type="entry name" value="Ribosomal_bL12"/>
    <property type="match status" value="1"/>
</dbReference>
<dbReference type="InterPro" id="IPR000206">
    <property type="entry name" value="Ribosomal_bL12"/>
</dbReference>
<dbReference type="InterPro" id="IPR013823">
    <property type="entry name" value="Ribosomal_bL12_C"/>
</dbReference>
<dbReference type="InterPro" id="IPR014719">
    <property type="entry name" value="Ribosomal_bL12_C/ClpS-like"/>
</dbReference>
<dbReference type="InterPro" id="IPR008932">
    <property type="entry name" value="Ribosomal_bL12_oligo"/>
</dbReference>
<dbReference type="InterPro" id="IPR036235">
    <property type="entry name" value="Ribosomal_bL12_oligo_N_sf"/>
</dbReference>
<dbReference type="NCBIfam" id="TIGR00855">
    <property type="entry name" value="L12"/>
    <property type="match status" value="1"/>
</dbReference>
<dbReference type="PANTHER" id="PTHR45987">
    <property type="entry name" value="39S RIBOSOMAL PROTEIN L12"/>
    <property type="match status" value="1"/>
</dbReference>
<dbReference type="PANTHER" id="PTHR45987:SF4">
    <property type="entry name" value="LARGE RIBOSOMAL SUBUNIT PROTEIN BL12M"/>
    <property type="match status" value="1"/>
</dbReference>
<dbReference type="Pfam" id="PF00542">
    <property type="entry name" value="Ribosomal_L12"/>
    <property type="match status" value="1"/>
</dbReference>
<dbReference type="Pfam" id="PF16320">
    <property type="entry name" value="Ribosomal_L12_N"/>
    <property type="match status" value="1"/>
</dbReference>
<dbReference type="SUPFAM" id="SSF54736">
    <property type="entry name" value="ClpS-like"/>
    <property type="match status" value="1"/>
</dbReference>
<dbReference type="SUPFAM" id="SSF48300">
    <property type="entry name" value="Ribosomal protein L7/12, oligomerisation (N-terminal) domain"/>
    <property type="match status" value="1"/>
</dbReference>
<gene>
    <name evidence="1" type="primary">rplL</name>
    <name type="ordered locus">Tlet_0476</name>
</gene>
<comment type="function">
    <text evidence="1">Forms part of the ribosomal stalk which helps the ribosome interact with GTP-bound translation factors. Is thus essential for accurate translation.</text>
</comment>
<comment type="subunit">
    <text evidence="1">Homodimer. Part of the ribosomal stalk of the 50S ribosomal subunit. Forms a multimeric L10(L12)X complex, where L10 forms an elongated spine to which 2 to 4 L12 dimers bind in a sequential fashion. Binds GTP-bound translation factors.</text>
</comment>
<comment type="similarity">
    <text evidence="1">Belongs to the bacterial ribosomal protein bL12 family.</text>
</comment>
<proteinExistence type="inferred from homology"/>
<sequence length="129" mass="13407">MNVEQIVEAIEKLTVAELAELVKALEEKFGVSAAAPIAVAAAAAPAAGAQQAQAEEKTEFDVLLKGFGSNKIGVIKVVREITGLGLKEAKDLVEKAGSPDAIVKSGIPKNEAEDIKKKLEEAGAEVTLK</sequence>
<name>RL7_PSELT</name>
<reference key="1">
    <citation type="submission" date="2007-08" db="EMBL/GenBank/DDBJ databases">
        <title>Complete sequence of Thermotoga lettingae TMO.</title>
        <authorList>
            <consortium name="US DOE Joint Genome Institute"/>
            <person name="Copeland A."/>
            <person name="Lucas S."/>
            <person name="Lapidus A."/>
            <person name="Barry K."/>
            <person name="Glavina del Rio T."/>
            <person name="Dalin E."/>
            <person name="Tice H."/>
            <person name="Pitluck S."/>
            <person name="Foster B."/>
            <person name="Bruce D."/>
            <person name="Schmutz J."/>
            <person name="Larimer F."/>
            <person name="Land M."/>
            <person name="Hauser L."/>
            <person name="Kyrpides N."/>
            <person name="Mikhailova N."/>
            <person name="Nelson K."/>
            <person name="Gogarten J.P."/>
            <person name="Noll K."/>
            <person name="Richardson P."/>
        </authorList>
    </citation>
    <scope>NUCLEOTIDE SEQUENCE [LARGE SCALE GENOMIC DNA]</scope>
    <source>
        <strain>ATCC BAA-301 / DSM 14385 / NBRC 107922 / TMO</strain>
    </source>
</reference>
<feature type="chain" id="PRO_1000059930" description="Large ribosomal subunit protein bL12">
    <location>
        <begin position="1"/>
        <end position="129"/>
    </location>
</feature>
<protein>
    <recommendedName>
        <fullName evidence="1">Large ribosomal subunit protein bL12</fullName>
    </recommendedName>
    <alternativeName>
        <fullName evidence="2">50S ribosomal protein L7/L12</fullName>
    </alternativeName>
</protein>
<keyword id="KW-1185">Reference proteome</keyword>
<keyword id="KW-0687">Ribonucleoprotein</keyword>
<keyword id="KW-0689">Ribosomal protein</keyword>
<accession>A8F4F9</accession>